<gene>
    <name evidence="4 7" type="primary">rhoad</name>
</gene>
<feature type="chain" id="PRO_0000434741" description="Rho-related GTP-binding protein RhoA-D">
    <location>
        <begin position="1"/>
        <end position="190"/>
    </location>
</feature>
<feature type="propeptide" id="PRO_0000434742" description="Removed in mature form" evidence="1">
    <location>
        <begin position="191"/>
        <end position="193"/>
    </location>
</feature>
<feature type="binding site" evidence="2">
    <location>
        <begin position="12"/>
        <end position="19"/>
    </location>
    <ligand>
        <name>GTP</name>
        <dbReference type="ChEBI" id="CHEBI:37565"/>
    </ligand>
</feature>
<feature type="binding site" evidence="3">
    <location>
        <begin position="30"/>
        <end position="37"/>
    </location>
    <ligand>
        <name>GTP</name>
        <dbReference type="ChEBI" id="CHEBI:37565"/>
    </ligand>
</feature>
<feature type="binding site" evidence="3">
    <location>
        <begin position="59"/>
        <end position="63"/>
    </location>
    <ligand>
        <name>GTP</name>
        <dbReference type="ChEBI" id="CHEBI:37565"/>
    </ligand>
</feature>
<feature type="binding site" evidence="2">
    <location>
        <begin position="117"/>
        <end position="120"/>
    </location>
    <ligand>
        <name>GTP</name>
        <dbReference type="ChEBI" id="CHEBI:37565"/>
    </ligand>
</feature>
<feature type="binding site" evidence="3">
    <location>
        <begin position="160"/>
        <end position="162"/>
    </location>
    <ligand>
        <name>GTP</name>
        <dbReference type="ChEBI" id="CHEBI:37565"/>
    </ligand>
</feature>
<feature type="modified residue" description="Cysteine methyl ester" evidence="1">
    <location>
        <position position="190"/>
    </location>
</feature>
<feature type="lipid moiety-binding region" description="S-geranylgeranyl cysteine" evidence="1">
    <location>
        <position position="190"/>
    </location>
</feature>
<feature type="glycosylation site" description="(Microbial infection) O-linked (GlcNAc) tyrosine; by Yersinia Afp18" evidence="6">
    <location>
        <position position="34"/>
    </location>
</feature>
<keyword id="KW-1003">Cell membrane</keyword>
<keyword id="KW-0325">Glycoprotein</keyword>
<keyword id="KW-0342">GTP-binding</keyword>
<keyword id="KW-0449">Lipoprotein</keyword>
<keyword id="KW-0472">Membrane</keyword>
<keyword id="KW-0488">Methylation</keyword>
<keyword id="KW-0547">Nucleotide-binding</keyword>
<keyword id="KW-0636">Prenylation</keyword>
<keyword id="KW-1185">Reference proteome</keyword>
<sequence>MAAIRKKLVIVGDGACGKTCLLIVFSKDQFPEVYVPTVFENYIADIEVDSKQVELALWDTAGQEDYDRLRPLSYPDTDVILMCFSVDSPDSLENIPEKWTPEVKHFCPNVPIILVGNKKDLRNDEHTRRELIKMKQEPVKPEEGRDMANRISAFGYLECSAKTKDGVREVFEMATRAALQVRKRKKRSGCLLL</sequence>
<proteinExistence type="evidence at protein level"/>
<evidence type="ECO:0000250" key="1">
    <source>
        <dbReference type="UniProtKB" id="P61585"/>
    </source>
</evidence>
<evidence type="ECO:0000250" key="2">
    <source>
        <dbReference type="UniProtKB" id="P61586"/>
    </source>
</evidence>
<evidence type="ECO:0000250" key="3">
    <source>
        <dbReference type="UniProtKB" id="P62820"/>
    </source>
</evidence>
<evidence type="ECO:0000303" key="4">
    <source>
    </source>
</evidence>
<evidence type="ECO:0000305" key="5"/>
<evidence type="ECO:0000305" key="6">
    <source>
    </source>
</evidence>
<evidence type="ECO:0000312" key="7">
    <source>
        <dbReference type="ZFIN" id="ZDB-GENE-040718-144"/>
    </source>
</evidence>
<reference key="1">
    <citation type="journal article" date="2005" name="Genomics">
        <title>Genomic annotation and expression analysis of the zebrafish Rho small GTPase family during development and bacterial infection.</title>
        <authorList>
            <person name="Salas-Vidal E."/>
            <person name="Meijer A.H."/>
            <person name="Cheng X."/>
            <person name="Spaink H.P."/>
        </authorList>
    </citation>
    <scope>NUCLEOTIDE SEQUENCE [MRNA]</scope>
</reference>
<reference key="2">
    <citation type="journal article" date="2013" name="Nature">
        <title>The zebrafish reference genome sequence and its relationship to the human genome.</title>
        <authorList>
            <person name="Howe K."/>
            <person name="Clark M.D."/>
            <person name="Torroja C.F."/>
            <person name="Torrance J."/>
            <person name="Berthelot C."/>
            <person name="Muffato M."/>
            <person name="Collins J.E."/>
            <person name="Humphray S."/>
            <person name="McLaren K."/>
            <person name="Matthews L."/>
            <person name="McLaren S."/>
            <person name="Sealy I."/>
            <person name="Caccamo M."/>
            <person name="Churcher C."/>
            <person name="Scott C."/>
            <person name="Barrett J.C."/>
            <person name="Koch R."/>
            <person name="Rauch G.J."/>
            <person name="White S."/>
            <person name="Chow W."/>
            <person name="Kilian B."/>
            <person name="Quintais L.T."/>
            <person name="Guerra-Assuncao J.A."/>
            <person name="Zhou Y."/>
            <person name="Gu Y."/>
            <person name="Yen J."/>
            <person name="Vogel J.H."/>
            <person name="Eyre T."/>
            <person name="Redmond S."/>
            <person name="Banerjee R."/>
            <person name="Chi J."/>
            <person name="Fu B."/>
            <person name="Langley E."/>
            <person name="Maguire S.F."/>
            <person name="Laird G.K."/>
            <person name="Lloyd D."/>
            <person name="Kenyon E."/>
            <person name="Donaldson S."/>
            <person name="Sehra H."/>
            <person name="Almeida-King J."/>
            <person name="Loveland J."/>
            <person name="Trevanion S."/>
            <person name="Jones M."/>
            <person name="Quail M."/>
            <person name="Willey D."/>
            <person name="Hunt A."/>
            <person name="Burton J."/>
            <person name="Sims S."/>
            <person name="McLay K."/>
            <person name="Plumb B."/>
            <person name="Davis J."/>
            <person name="Clee C."/>
            <person name="Oliver K."/>
            <person name="Clark R."/>
            <person name="Riddle C."/>
            <person name="Elliot D."/>
            <person name="Threadgold G."/>
            <person name="Harden G."/>
            <person name="Ware D."/>
            <person name="Begum S."/>
            <person name="Mortimore B."/>
            <person name="Kerry G."/>
            <person name="Heath P."/>
            <person name="Phillimore B."/>
            <person name="Tracey A."/>
            <person name="Corby N."/>
            <person name="Dunn M."/>
            <person name="Johnson C."/>
            <person name="Wood J."/>
            <person name="Clark S."/>
            <person name="Pelan S."/>
            <person name="Griffiths G."/>
            <person name="Smith M."/>
            <person name="Glithero R."/>
            <person name="Howden P."/>
            <person name="Barker N."/>
            <person name="Lloyd C."/>
            <person name="Stevens C."/>
            <person name="Harley J."/>
            <person name="Holt K."/>
            <person name="Panagiotidis G."/>
            <person name="Lovell J."/>
            <person name="Beasley H."/>
            <person name="Henderson C."/>
            <person name="Gordon D."/>
            <person name="Auger K."/>
            <person name="Wright D."/>
            <person name="Collins J."/>
            <person name="Raisen C."/>
            <person name="Dyer L."/>
            <person name="Leung K."/>
            <person name="Robertson L."/>
            <person name="Ambridge K."/>
            <person name="Leongamornlert D."/>
            <person name="McGuire S."/>
            <person name="Gilderthorp R."/>
            <person name="Griffiths C."/>
            <person name="Manthravadi D."/>
            <person name="Nichol S."/>
            <person name="Barker G."/>
            <person name="Whitehead S."/>
            <person name="Kay M."/>
            <person name="Brown J."/>
            <person name="Murnane C."/>
            <person name="Gray E."/>
            <person name="Humphries M."/>
            <person name="Sycamore N."/>
            <person name="Barker D."/>
            <person name="Saunders D."/>
            <person name="Wallis J."/>
            <person name="Babbage A."/>
            <person name="Hammond S."/>
            <person name="Mashreghi-Mohammadi M."/>
            <person name="Barr L."/>
            <person name="Martin S."/>
            <person name="Wray P."/>
            <person name="Ellington A."/>
            <person name="Matthews N."/>
            <person name="Ellwood M."/>
            <person name="Woodmansey R."/>
            <person name="Clark G."/>
            <person name="Cooper J."/>
            <person name="Tromans A."/>
            <person name="Grafham D."/>
            <person name="Skuce C."/>
            <person name="Pandian R."/>
            <person name="Andrews R."/>
            <person name="Harrison E."/>
            <person name="Kimberley A."/>
            <person name="Garnett J."/>
            <person name="Fosker N."/>
            <person name="Hall R."/>
            <person name="Garner P."/>
            <person name="Kelly D."/>
            <person name="Bird C."/>
            <person name="Palmer S."/>
            <person name="Gehring I."/>
            <person name="Berger A."/>
            <person name="Dooley C.M."/>
            <person name="Ersan-Urun Z."/>
            <person name="Eser C."/>
            <person name="Geiger H."/>
            <person name="Geisler M."/>
            <person name="Karotki L."/>
            <person name="Kirn A."/>
            <person name="Konantz J."/>
            <person name="Konantz M."/>
            <person name="Oberlander M."/>
            <person name="Rudolph-Geiger S."/>
            <person name="Teucke M."/>
            <person name="Lanz C."/>
            <person name="Raddatz G."/>
            <person name="Osoegawa K."/>
            <person name="Zhu B."/>
            <person name="Rapp A."/>
            <person name="Widaa S."/>
            <person name="Langford C."/>
            <person name="Yang F."/>
            <person name="Schuster S.C."/>
            <person name="Carter N.P."/>
            <person name="Harrow J."/>
            <person name="Ning Z."/>
            <person name="Herrero J."/>
            <person name="Searle S.M."/>
            <person name="Enright A."/>
            <person name="Geisler R."/>
            <person name="Plasterk R.H."/>
            <person name="Lee C."/>
            <person name="Westerfield M."/>
            <person name="de Jong P.J."/>
            <person name="Zon L.I."/>
            <person name="Postlethwait J.H."/>
            <person name="Nusslein-Volhard C."/>
            <person name="Hubbard T.J."/>
            <person name="Roest Crollius H."/>
            <person name="Rogers J."/>
            <person name="Stemple D.L."/>
        </authorList>
    </citation>
    <scope>NUCLEOTIDE SEQUENCE [LARGE SCALE GENOMIC DNA]</scope>
    <source>
        <strain>Tuebingen</strain>
    </source>
</reference>
<reference key="3">
    <citation type="submission" date="2004-07" db="EMBL/GenBank/DDBJ databases">
        <authorList>
            <consortium name="NIH - Zebrafish Gene Collection (ZGC) project"/>
        </authorList>
    </citation>
    <scope>NUCLEOTIDE SEQUENCE [LARGE SCALE MRNA]</scope>
</reference>
<reference key="4">
    <citation type="journal article" date="2015" name="Nat. Commun.">
        <title>Tyrosine glycosylation of Rho by Yersinia toxin impairs blastomere cell behaviour in zebrafish embryos.</title>
        <authorList>
            <person name="Jank T."/>
            <person name="Eckerle S."/>
            <person name="Steinemann M."/>
            <person name="Trillhaase C."/>
            <person name="Schimpl M."/>
            <person name="Wiese S."/>
            <person name="van Aalten D.M."/>
            <person name="Driever W."/>
            <person name="Aktories K."/>
        </authorList>
    </citation>
    <scope>GLYCOSYLATION AT TYR-34 (MICROBIAL INFECTION)</scope>
    <scope>SUBCELLULAR LOCATION</scope>
</reference>
<accession>Q6DHE8</accession>
<comment type="function">
    <text evidence="2">Regulates a signal transduction pathway linking plasma membrane receptors to the assembly of focal adhesions and actin stress fibers.</text>
</comment>
<comment type="subcellular location">
    <subcellularLocation>
        <location evidence="6">Cell membrane</location>
        <topology evidence="2">Lipid-anchor</topology>
        <orientation evidence="2">Cytoplasmic side</orientation>
    </subcellularLocation>
</comment>
<comment type="PTM">
    <text evidence="6">(Microbial infection) Glycosylated at Tyr-34 by Yersinia ruckeri toxin Afp18. Mono-O-GlcNAcylation by Afp18 inhibits RhoA activation by guanine nucleotide exchange factors and blocks RhoA signaling.</text>
</comment>
<comment type="similarity">
    <text evidence="5">Belongs to the small GTPase superfamily. Rho family.</text>
</comment>
<organism>
    <name type="scientific">Danio rerio</name>
    <name type="common">Zebrafish</name>
    <name type="synonym">Brachydanio rerio</name>
    <dbReference type="NCBI Taxonomy" id="7955"/>
    <lineage>
        <taxon>Eukaryota</taxon>
        <taxon>Metazoa</taxon>
        <taxon>Chordata</taxon>
        <taxon>Craniata</taxon>
        <taxon>Vertebrata</taxon>
        <taxon>Euteleostomi</taxon>
        <taxon>Actinopterygii</taxon>
        <taxon>Neopterygii</taxon>
        <taxon>Teleostei</taxon>
        <taxon>Ostariophysi</taxon>
        <taxon>Cypriniformes</taxon>
        <taxon>Danionidae</taxon>
        <taxon>Danioninae</taxon>
        <taxon>Danio</taxon>
    </lineage>
</organism>
<name>RHOAD_DANRE</name>
<dbReference type="EMBL" id="AY865557">
    <property type="protein sequence ID" value="AAX20129.1"/>
    <property type="molecule type" value="mRNA"/>
</dbReference>
<dbReference type="EMBL" id="AL954868">
    <property type="status" value="NOT_ANNOTATED_CDS"/>
    <property type="molecule type" value="Genomic_DNA"/>
</dbReference>
<dbReference type="EMBL" id="BX323059">
    <property type="status" value="NOT_ANNOTATED_CDS"/>
    <property type="molecule type" value="Genomic_DNA"/>
</dbReference>
<dbReference type="EMBL" id="BC076026">
    <property type="protein sequence ID" value="AAH76026.1"/>
    <property type="molecule type" value="mRNA"/>
</dbReference>
<dbReference type="RefSeq" id="NP_001002445.1">
    <property type="nucleotide sequence ID" value="NM_001002445.1"/>
</dbReference>
<dbReference type="SMR" id="Q6DHE8"/>
<dbReference type="FunCoup" id="Q6DHE8">
    <property type="interactions" value="3205"/>
</dbReference>
<dbReference type="STRING" id="7955.ENSDARP00000002761"/>
<dbReference type="GlyCosmos" id="Q6DHE8">
    <property type="glycosylation" value="1 site, No reported glycans"/>
</dbReference>
<dbReference type="PaxDb" id="7955-ENSDARP00000002761"/>
<dbReference type="Ensembl" id="ENSDART00000016696">
    <property type="protein sequence ID" value="ENSDARP00000002761"/>
    <property type="gene ID" value="ENSDARG00000018328"/>
</dbReference>
<dbReference type="Ensembl" id="ENSDART00000188966">
    <property type="protein sequence ID" value="ENSDARP00000151020"/>
    <property type="gene ID" value="ENSDARG00000113341"/>
</dbReference>
<dbReference type="GeneID" id="436718"/>
<dbReference type="KEGG" id="dre:436718"/>
<dbReference type="AGR" id="ZFIN:ZDB-GENE-040718-144"/>
<dbReference type="CTD" id="436718"/>
<dbReference type="ZFIN" id="ZDB-GENE-040718-144">
    <property type="gene designation" value="rhocb"/>
</dbReference>
<dbReference type="eggNOG" id="KOG0393">
    <property type="taxonomic scope" value="Eukaryota"/>
</dbReference>
<dbReference type="HOGENOM" id="CLU_041217_21_2_1"/>
<dbReference type="InParanoid" id="Q6DHE8"/>
<dbReference type="OMA" id="PRNKCLL"/>
<dbReference type="OrthoDB" id="8830751at2759"/>
<dbReference type="PhylomeDB" id="Q6DHE8"/>
<dbReference type="TreeFam" id="TF300837"/>
<dbReference type="PRO" id="PR:Q6DHE8"/>
<dbReference type="Proteomes" id="UP000000437">
    <property type="component" value="Alternate scaffold 8"/>
</dbReference>
<dbReference type="Proteomes" id="UP000000437">
    <property type="component" value="Chromosome 8"/>
</dbReference>
<dbReference type="Bgee" id="ENSDARG00000018328">
    <property type="expression patterns" value="Expressed in testis and 29 other cell types or tissues"/>
</dbReference>
<dbReference type="ExpressionAtlas" id="Q6DHE8">
    <property type="expression patterns" value="baseline and differential"/>
</dbReference>
<dbReference type="GO" id="GO:0005829">
    <property type="term" value="C:cytosol"/>
    <property type="evidence" value="ECO:0000318"/>
    <property type="project" value="GO_Central"/>
</dbReference>
<dbReference type="GO" id="GO:0005886">
    <property type="term" value="C:plasma membrane"/>
    <property type="evidence" value="ECO:0000318"/>
    <property type="project" value="GO_Central"/>
</dbReference>
<dbReference type="GO" id="GO:0005525">
    <property type="term" value="F:GTP binding"/>
    <property type="evidence" value="ECO:0000318"/>
    <property type="project" value="GO_Central"/>
</dbReference>
<dbReference type="GO" id="GO:0003924">
    <property type="term" value="F:GTPase activity"/>
    <property type="evidence" value="ECO:0000318"/>
    <property type="project" value="GO_Central"/>
</dbReference>
<dbReference type="GO" id="GO:0019901">
    <property type="term" value="F:protein kinase binding"/>
    <property type="evidence" value="ECO:0000318"/>
    <property type="project" value="GO_Central"/>
</dbReference>
<dbReference type="GO" id="GO:0007015">
    <property type="term" value="P:actin filament organization"/>
    <property type="evidence" value="ECO:0000318"/>
    <property type="project" value="GO_Central"/>
</dbReference>
<dbReference type="GO" id="GO:0016477">
    <property type="term" value="P:cell migration"/>
    <property type="evidence" value="ECO:0000318"/>
    <property type="project" value="GO_Central"/>
</dbReference>
<dbReference type="GO" id="GO:0000281">
    <property type="term" value="P:mitotic cytokinesis"/>
    <property type="evidence" value="ECO:0000318"/>
    <property type="project" value="GO_Central"/>
</dbReference>
<dbReference type="GO" id="GO:0032956">
    <property type="term" value="P:regulation of actin cytoskeleton organization"/>
    <property type="evidence" value="ECO:0000318"/>
    <property type="project" value="GO_Central"/>
</dbReference>
<dbReference type="GO" id="GO:0007165">
    <property type="term" value="P:signal transduction"/>
    <property type="evidence" value="ECO:0000318"/>
    <property type="project" value="GO_Central"/>
</dbReference>
<dbReference type="GO" id="GO:1902766">
    <property type="term" value="P:skeletal muscle satellite cell migration"/>
    <property type="evidence" value="ECO:0000250"/>
    <property type="project" value="AgBase"/>
</dbReference>
<dbReference type="GO" id="GO:0007264">
    <property type="term" value="P:small GTPase-mediated signal transduction"/>
    <property type="evidence" value="ECO:0007669"/>
    <property type="project" value="InterPro"/>
</dbReference>
<dbReference type="GO" id="GO:0044319">
    <property type="term" value="P:wound healing, spreading of cells"/>
    <property type="evidence" value="ECO:0000250"/>
    <property type="project" value="AgBase"/>
</dbReference>
<dbReference type="CDD" id="cd01870">
    <property type="entry name" value="RhoA_like"/>
    <property type="match status" value="1"/>
</dbReference>
<dbReference type="FunFam" id="3.40.50.300:FF:000095">
    <property type="entry name" value="Rho-related GTP-binding protein RhoC"/>
    <property type="match status" value="1"/>
</dbReference>
<dbReference type="Gene3D" id="3.40.50.300">
    <property type="entry name" value="P-loop containing nucleotide triphosphate hydrolases"/>
    <property type="match status" value="1"/>
</dbReference>
<dbReference type="InterPro" id="IPR027417">
    <property type="entry name" value="P-loop_NTPase"/>
</dbReference>
<dbReference type="InterPro" id="IPR005225">
    <property type="entry name" value="Small_GTP-bd"/>
</dbReference>
<dbReference type="InterPro" id="IPR001806">
    <property type="entry name" value="Small_GTPase"/>
</dbReference>
<dbReference type="InterPro" id="IPR003578">
    <property type="entry name" value="Small_GTPase_Rho"/>
</dbReference>
<dbReference type="NCBIfam" id="TIGR00231">
    <property type="entry name" value="small_GTP"/>
    <property type="match status" value="1"/>
</dbReference>
<dbReference type="PANTHER" id="PTHR24072">
    <property type="entry name" value="RHO FAMILY GTPASE"/>
    <property type="match status" value="1"/>
</dbReference>
<dbReference type="Pfam" id="PF00071">
    <property type="entry name" value="Ras"/>
    <property type="match status" value="1"/>
</dbReference>
<dbReference type="PRINTS" id="PR00449">
    <property type="entry name" value="RASTRNSFRMNG"/>
</dbReference>
<dbReference type="SMART" id="SM00175">
    <property type="entry name" value="RAB"/>
    <property type="match status" value="1"/>
</dbReference>
<dbReference type="SMART" id="SM00173">
    <property type="entry name" value="RAS"/>
    <property type="match status" value="1"/>
</dbReference>
<dbReference type="SMART" id="SM00174">
    <property type="entry name" value="RHO"/>
    <property type="match status" value="1"/>
</dbReference>
<dbReference type="SUPFAM" id="SSF52540">
    <property type="entry name" value="P-loop containing nucleoside triphosphate hydrolases"/>
    <property type="match status" value="1"/>
</dbReference>
<dbReference type="PROSITE" id="PS51420">
    <property type="entry name" value="RHO"/>
    <property type="match status" value="1"/>
</dbReference>
<protein>
    <recommendedName>
        <fullName evidence="5">Rho-related GTP-binding protein RhoA-D</fullName>
    </recommendedName>
</protein>